<protein>
    <recommendedName>
        <fullName evidence="1">ATP phosphoribosyltransferase</fullName>
        <shortName evidence="1">ATP-PRT</shortName>
        <shortName evidence="1">ATP-PRTase</shortName>
        <ecNumber evidence="1">2.4.2.17</ecNumber>
    </recommendedName>
</protein>
<sequence>MLRIAIAKGRLMDSLINYLDVIEYTTLSETLKNRERQLLLSVDNIECILVKGSDVPIYVEQGMADIGIVGSDILDERQYNVNNLLNMPFGACHFAVAAKPETTNYRKIATSYVHTAETYFKSKGIDVELIKLNGSVELACVVDMVDGIVDIVQTGTTLKANGLVEKQHISDINARLITNKAAYFKKSQLIEQFIRSLEVSIANA</sequence>
<gene>
    <name evidence="1" type="primary">hisG</name>
    <name type="ordered locus">SAHV_2663</name>
</gene>
<keyword id="KW-0028">Amino-acid biosynthesis</keyword>
<keyword id="KW-0067">ATP-binding</keyword>
<keyword id="KW-0963">Cytoplasm</keyword>
<keyword id="KW-0328">Glycosyltransferase</keyword>
<keyword id="KW-0368">Histidine biosynthesis</keyword>
<keyword id="KW-0547">Nucleotide-binding</keyword>
<keyword id="KW-0808">Transferase</keyword>
<dbReference type="EC" id="2.4.2.17" evidence="1"/>
<dbReference type="EMBL" id="AP009324">
    <property type="protein sequence ID" value="BAF79546.1"/>
    <property type="molecule type" value="Genomic_DNA"/>
</dbReference>
<dbReference type="RefSeq" id="WP_000944149.1">
    <property type="nucleotide sequence ID" value="NC_009782.1"/>
</dbReference>
<dbReference type="SMR" id="A7X770"/>
<dbReference type="KEGG" id="saw:SAHV_2663"/>
<dbReference type="HOGENOM" id="CLU_038115_2_0_9"/>
<dbReference type="UniPathway" id="UPA00031">
    <property type="reaction ID" value="UER00006"/>
</dbReference>
<dbReference type="GO" id="GO:0005737">
    <property type="term" value="C:cytoplasm"/>
    <property type="evidence" value="ECO:0007669"/>
    <property type="project" value="UniProtKB-SubCell"/>
</dbReference>
<dbReference type="GO" id="GO:0005524">
    <property type="term" value="F:ATP binding"/>
    <property type="evidence" value="ECO:0007669"/>
    <property type="project" value="UniProtKB-KW"/>
</dbReference>
<dbReference type="GO" id="GO:0003879">
    <property type="term" value="F:ATP phosphoribosyltransferase activity"/>
    <property type="evidence" value="ECO:0007669"/>
    <property type="project" value="UniProtKB-UniRule"/>
</dbReference>
<dbReference type="GO" id="GO:0000105">
    <property type="term" value="P:L-histidine biosynthetic process"/>
    <property type="evidence" value="ECO:0007669"/>
    <property type="project" value="UniProtKB-UniRule"/>
</dbReference>
<dbReference type="CDD" id="cd13595">
    <property type="entry name" value="PBP2_HisGs"/>
    <property type="match status" value="1"/>
</dbReference>
<dbReference type="FunFam" id="3.40.190.10:FF:000008">
    <property type="entry name" value="ATP phosphoribosyltransferase"/>
    <property type="match status" value="1"/>
</dbReference>
<dbReference type="Gene3D" id="3.40.190.10">
    <property type="entry name" value="Periplasmic binding protein-like II"/>
    <property type="match status" value="2"/>
</dbReference>
<dbReference type="HAMAP" id="MF_01018">
    <property type="entry name" value="HisG_Short"/>
    <property type="match status" value="1"/>
</dbReference>
<dbReference type="InterPro" id="IPR013820">
    <property type="entry name" value="ATP_PRibTrfase_cat"/>
</dbReference>
<dbReference type="InterPro" id="IPR001348">
    <property type="entry name" value="ATP_PRibTrfase_HisG"/>
</dbReference>
<dbReference type="InterPro" id="IPR024893">
    <property type="entry name" value="ATP_PRibTrfase_HisG_short"/>
</dbReference>
<dbReference type="NCBIfam" id="TIGR00070">
    <property type="entry name" value="hisG"/>
    <property type="match status" value="1"/>
</dbReference>
<dbReference type="PANTHER" id="PTHR21403:SF8">
    <property type="entry name" value="ATP PHOSPHORIBOSYLTRANSFERASE"/>
    <property type="match status" value="1"/>
</dbReference>
<dbReference type="PANTHER" id="PTHR21403">
    <property type="entry name" value="ATP PHOSPHORIBOSYLTRANSFERASE ATP-PRTASE"/>
    <property type="match status" value="1"/>
</dbReference>
<dbReference type="Pfam" id="PF01634">
    <property type="entry name" value="HisG"/>
    <property type="match status" value="1"/>
</dbReference>
<dbReference type="SUPFAM" id="SSF53850">
    <property type="entry name" value="Periplasmic binding protein-like II"/>
    <property type="match status" value="1"/>
</dbReference>
<accession>A7X770</accession>
<proteinExistence type="inferred from homology"/>
<reference key="1">
    <citation type="journal article" date="2008" name="Antimicrob. Agents Chemother.">
        <title>Mutated response regulator graR is responsible for phenotypic conversion of Staphylococcus aureus from heterogeneous vancomycin-intermediate resistance to vancomycin-intermediate resistance.</title>
        <authorList>
            <person name="Neoh H.-M."/>
            <person name="Cui L."/>
            <person name="Yuzawa H."/>
            <person name="Takeuchi F."/>
            <person name="Matsuo M."/>
            <person name="Hiramatsu K."/>
        </authorList>
    </citation>
    <scope>NUCLEOTIDE SEQUENCE [LARGE SCALE GENOMIC DNA]</scope>
    <source>
        <strain>Mu3 / ATCC 700698</strain>
    </source>
</reference>
<evidence type="ECO:0000255" key="1">
    <source>
        <dbReference type="HAMAP-Rule" id="MF_01018"/>
    </source>
</evidence>
<comment type="function">
    <text evidence="1">Catalyzes the condensation of ATP and 5-phosphoribose 1-diphosphate to form N'-(5'-phosphoribosyl)-ATP (PR-ATP). Has a crucial role in the pathway because the rate of histidine biosynthesis seems to be controlled primarily by regulation of HisG enzymatic activity.</text>
</comment>
<comment type="catalytic activity">
    <reaction evidence="1">
        <text>1-(5-phospho-beta-D-ribosyl)-ATP + diphosphate = 5-phospho-alpha-D-ribose 1-diphosphate + ATP</text>
        <dbReference type="Rhea" id="RHEA:18473"/>
        <dbReference type="ChEBI" id="CHEBI:30616"/>
        <dbReference type="ChEBI" id="CHEBI:33019"/>
        <dbReference type="ChEBI" id="CHEBI:58017"/>
        <dbReference type="ChEBI" id="CHEBI:73183"/>
        <dbReference type="EC" id="2.4.2.17"/>
    </reaction>
</comment>
<comment type="pathway">
    <text evidence="1">Amino-acid biosynthesis; L-histidine biosynthesis; L-histidine from 5-phospho-alpha-D-ribose 1-diphosphate: step 1/9.</text>
</comment>
<comment type="subunit">
    <text evidence="1">Heteromultimer composed of HisG and HisZ subunits.</text>
</comment>
<comment type="subcellular location">
    <subcellularLocation>
        <location evidence="1">Cytoplasm</location>
    </subcellularLocation>
</comment>
<comment type="domain">
    <text>Lacks the C-terminal regulatory region which is replaced by HisZ.</text>
</comment>
<comment type="similarity">
    <text evidence="1">Belongs to the ATP phosphoribosyltransferase family. Short subfamily.</text>
</comment>
<feature type="chain" id="PRO_1000063309" description="ATP phosphoribosyltransferase">
    <location>
        <begin position="1"/>
        <end position="204"/>
    </location>
</feature>
<name>HIS1_STAA1</name>
<organism>
    <name type="scientific">Staphylococcus aureus (strain Mu3 / ATCC 700698)</name>
    <dbReference type="NCBI Taxonomy" id="418127"/>
    <lineage>
        <taxon>Bacteria</taxon>
        <taxon>Bacillati</taxon>
        <taxon>Bacillota</taxon>
        <taxon>Bacilli</taxon>
        <taxon>Bacillales</taxon>
        <taxon>Staphylococcaceae</taxon>
        <taxon>Staphylococcus</taxon>
    </lineage>
</organism>